<name>RL9_PROMM</name>
<evidence type="ECO:0000255" key="1">
    <source>
        <dbReference type="HAMAP-Rule" id="MF_00503"/>
    </source>
</evidence>
<evidence type="ECO:0000305" key="2"/>
<comment type="function">
    <text evidence="1">Binds to the 23S rRNA.</text>
</comment>
<comment type="similarity">
    <text evidence="1">Belongs to the bacterial ribosomal protein bL9 family.</text>
</comment>
<proteinExistence type="inferred from homology"/>
<sequence length="152" mass="16762">MAKRVQVVLNEDVLSLGKDGDLVEVAPGYARNFLLPFGKAVPVTPAVMKQVGHRRAKQAEHQAAIKQEALDFQTALVTIGRFTVKKQTGEDDVLFGTVTNGDVAEAIETATKKEIDRRNIIVPEIHRTGSYKVQVKLHNEVNAEINLEVVSY</sequence>
<feature type="chain" id="PRO_0000236566" description="Large ribosomal subunit protein bL9">
    <location>
        <begin position="1"/>
        <end position="152"/>
    </location>
</feature>
<accession>Q7V406</accession>
<reference key="1">
    <citation type="journal article" date="2003" name="Nature">
        <title>Genome divergence in two Prochlorococcus ecotypes reflects oceanic niche differentiation.</title>
        <authorList>
            <person name="Rocap G."/>
            <person name="Larimer F.W."/>
            <person name="Lamerdin J.E."/>
            <person name="Malfatti S."/>
            <person name="Chain P."/>
            <person name="Ahlgren N.A."/>
            <person name="Arellano A."/>
            <person name="Coleman M."/>
            <person name="Hauser L."/>
            <person name="Hess W.R."/>
            <person name="Johnson Z.I."/>
            <person name="Land M.L."/>
            <person name="Lindell D."/>
            <person name="Post A.F."/>
            <person name="Regala W."/>
            <person name="Shah M."/>
            <person name="Shaw S.L."/>
            <person name="Steglich C."/>
            <person name="Sullivan M.B."/>
            <person name="Ting C.S."/>
            <person name="Tolonen A."/>
            <person name="Webb E.A."/>
            <person name="Zinser E.R."/>
            <person name="Chisholm S.W."/>
        </authorList>
    </citation>
    <scope>NUCLEOTIDE SEQUENCE [LARGE SCALE GENOMIC DNA]</scope>
    <source>
        <strain>MIT 9313</strain>
    </source>
</reference>
<keyword id="KW-1185">Reference proteome</keyword>
<keyword id="KW-0687">Ribonucleoprotein</keyword>
<keyword id="KW-0689">Ribosomal protein</keyword>
<keyword id="KW-0694">RNA-binding</keyword>
<keyword id="KW-0699">rRNA-binding</keyword>
<organism>
    <name type="scientific">Prochlorococcus marinus (strain MIT 9313)</name>
    <dbReference type="NCBI Taxonomy" id="74547"/>
    <lineage>
        <taxon>Bacteria</taxon>
        <taxon>Bacillati</taxon>
        <taxon>Cyanobacteriota</taxon>
        <taxon>Cyanophyceae</taxon>
        <taxon>Synechococcales</taxon>
        <taxon>Prochlorococcaceae</taxon>
        <taxon>Prochlorococcus</taxon>
    </lineage>
</organism>
<dbReference type="EMBL" id="BX548175">
    <property type="protein sequence ID" value="CAE22349.1"/>
    <property type="molecule type" value="Genomic_DNA"/>
</dbReference>
<dbReference type="RefSeq" id="WP_011131539.1">
    <property type="nucleotide sequence ID" value="NC_005071.1"/>
</dbReference>
<dbReference type="SMR" id="Q7V406"/>
<dbReference type="KEGG" id="pmt:PMT_2175"/>
<dbReference type="eggNOG" id="COG0359">
    <property type="taxonomic scope" value="Bacteria"/>
</dbReference>
<dbReference type="HOGENOM" id="CLU_078938_3_0_3"/>
<dbReference type="OrthoDB" id="9788336at2"/>
<dbReference type="Proteomes" id="UP000001423">
    <property type="component" value="Chromosome"/>
</dbReference>
<dbReference type="GO" id="GO:1990904">
    <property type="term" value="C:ribonucleoprotein complex"/>
    <property type="evidence" value="ECO:0007669"/>
    <property type="project" value="UniProtKB-KW"/>
</dbReference>
<dbReference type="GO" id="GO:0005840">
    <property type="term" value="C:ribosome"/>
    <property type="evidence" value="ECO:0007669"/>
    <property type="project" value="UniProtKB-KW"/>
</dbReference>
<dbReference type="GO" id="GO:0019843">
    <property type="term" value="F:rRNA binding"/>
    <property type="evidence" value="ECO:0007669"/>
    <property type="project" value="UniProtKB-UniRule"/>
</dbReference>
<dbReference type="GO" id="GO:0003735">
    <property type="term" value="F:structural constituent of ribosome"/>
    <property type="evidence" value="ECO:0007669"/>
    <property type="project" value="InterPro"/>
</dbReference>
<dbReference type="GO" id="GO:0006412">
    <property type="term" value="P:translation"/>
    <property type="evidence" value="ECO:0007669"/>
    <property type="project" value="UniProtKB-UniRule"/>
</dbReference>
<dbReference type="Gene3D" id="3.10.430.100">
    <property type="entry name" value="Ribosomal protein L9, C-terminal domain"/>
    <property type="match status" value="1"/>
</dbReference>
<dbReference type="Gene3D" id="3.40.5.10">
    <property type="entry name" value="Ribosomal protein L9, N-terminal domain"/>
    <property type="match status" value="1"/>
</dbReference>
<dbReference type="HAMAP" id="MF_00503">
    <property type="entry name" value="Ribosomal_bL9"/>
    <property type="match status" value="1"/>
</dbReference>
<dbReference type="InterPro" id="IPR000244">
    <property type="entry name" value="Ribosomal_bL9"/>
</dbReference>
<dbReference type="InterPro" id="IPR009027">
    <property type="entry name" value="Ribosomal_bL9/RNase_H1_N"/>
</dbReference>
<dbReference type="InterPro" id="IPR020594">
    <property type="entry name" value="Ribosomal_bL9_bac/chp"/>
</dbReference>
<dbReference type="InterPro" id="IPR020069">
    <property type="entry name" value="Ribosomal_bL9_C"/>
</dbReference>
<dbReference type="InterPro" id="IPR036791">
    <property type="entry name" value="Ribosomal_bL9_C_sf"/>
</dbReference>
<dbReference type="InterPro" id="IPR020070">
    <property type="entry name" value="Ribosomal_bL9_N"/>
</dbReference>
<dbReference type="InterPro" id="IPR036935">
    <property type="entry name" value="Ribosomal_bL9_N_sf"/>
</dbReference>
<dbReference type="NCBIfam" id="TIGR00158">
    <property type="entry name" value="L9"/>
    <property type="match status" value="1"/>
</dbReference>
<dbReference type="PANTHER" id="PTHR21368">
    <property type="entry name" value="50S RIBOSOMAL PROTEIN L9"/>
    <property type="match status" value="1"/>
</dbReference>
<dbReference type="Pfam" id="PF03948">
    <property type="entry name" value="Ribosomal_L9_C"/>
    <property type="match status" value="1"/>
</dbReference>
<dbReference type="Pfam" id="PF01281">
    <property type="entry name" value="Ribosomal_L9_N"/>
    <property type="match status" value="1"/>
</dbReference>
<dbReference type="SUPFAM" id="SSF55658">
    <property type="entry name" value="L9 N-domain-like"/>
    <property type="match status" value="1"/>
</dbReference>
<dbReference type="SUPFAM" id="SSF55653">
    <property type="entry name" value="Ribosomal protein L9 C-domain"/>
    <property type="match status" value="1"/>
</dbReference>
<dbReference type="PROSITE" id="PS00651">
    <property type="entry name" value="RIBOSOMAL_L9"/>
    <property type="match status" value="1"/>
</dbReference>
<gene>
    <name evidence="1" type="primary">rplI</name>
    <name evidence="1" type="synonym">rpl9</name>
    <name type="ordered locus">PMT_2175</name>
</gene>
<protein>
    <recommendedName>
        <fullName evidence="1">Large ribosomal subunit protein bL9</fullName>
    </recommendedName>
    <alternativeName>
        <fullName evidence="2">50S ribosomal protein L9</fullName>
    </alternativeName>
</protein>